<name>NAHB_PSEU8</name>
<accession>P0A170</accession>
<accession>O33462</accession>
<accession>Q52459</accession>
<feature type="chain" id="PRO_0000054731" description="1,2-dihydroxy-1,2-dihydronaphthalene dehydrogenase">
    <location>
        <begin position="1"/>
        <end position="259"/>
    </location>
</feature>
<feature type="active site" description="Proton acceptor" evidence="1">
    <location>
        <position position="153"/>
    </location>
</feature>
<feature type="binding site" evidence="1">
    <location>
        <begin position="8"/>
        <end position="32"/>
    </location>
    <ligand>
        <name>NAD(+)</name>
        <dbReference type="ChEBI" id="CHEBI:57540"/>
    </ligand>
</feature>
<feature type="binding site" evidence="1">
    <location>
        <position position="140"/>
    </location>
    <ligand>
        <name>substrate</name>
    </ligand>
</feature>
<protein>
    <recommendedName>
        <fullName>1,2-dihydroxy-1,2-dihydronaphthalene dehydrogenase</fullName>
        <ecNumber>1.3.1.29</ecNumber>
    </recommendedName>
    <alternativeName>
        <fullName>Cis-naphthalene dihydrodiol dehydrogenase</fullName>
    </alternativeName>
    <alternativeName>
        <fullName>Dibenzothiophene dihydrodiol dehydrogenase</fullName>
        <ecNumber>1.3.1.60</ecNumber>
    </alternativeName>
</protein>
<proteinExistence type="inferred from homology"/>
<reference key="1">
    <citation type="journal article" date="1993" name="J. Bacteriol.">
        <title>Metabolism of dibenzothiophene and naphthalene in Pseudomonas strains: complete DNA sequence of an upper naphthalene catabolic pathway.</title>
        <authorList>
            <person name="Denome S.A."/>
            <person name="Stanley D.C."/>
            <person name="Olson E.S."/>
            <person name="Young K.D."/>
        </authorList>
    </citation>
    <scope>NUCLEOTIDE SEQUENCE [GENOMIC DNA]</scope>
    <source>
        <strain>C18</strain>
        <plasmid>unnamed</plasmid>
    </source>
</reference>
<sequence length="259" mass="27528">MGNQQVVSITGAGSGIGLELVRSFKSAGYYVSALVRNEEQEALLCKEFKDALEIVVGDVRDHATNEKLIKQTIDRFGHLDCFIANAGIWDYMLSIEEPWEKISSSFDEIFDINVKSYFSGISAALPELKKTNGSVVMTASVSSHAVGGGGSCYIASKHAVLGMVKALAYELAPEVRVNAVSPGGTVTSLCGPASAGFDKMHMKDMPGIDDMIKGLTPLGFAAKPEDVVAPYLLLASRKQGKFITGTVISIDGGMALGRK</sequence>
<organism>
    <name type="scientific">Pseudomonas sp. (strain C18)</name>
    <dbReference type="NCBI Taxonomy" id="69011"/>
    <lineage>
        <taxon>Bacteria</taxon>
        <taxon>Pseudomonadati</taxon>
        <taxon>Pseudomonadota</taxon>
    </lineage>
</organism>
<comment type="function">
    <text>Catalyzes the oxidation of naphthalene dihydrodiol into 1,2-dihydroxynaphthalene.</text>
</comment>
<comment type="catalytic activity">
    <reaction>
        <text>(1R,2S)-1,2-dihydronaphthalene-1,2-diol + NAD(+) = naphthalene-1,2-diol + NADH + H(+)</text>
        <dbReference type="Rhea" id="RHEA:11832"/>
        <dbReference type="ChEBI" id="CHEBI:15378"/>
        <dbReference type="ChEBI" id="CHEBI:17435"/>
        <dbReference type="ChEBI" id="CHEBI:44343"/>
        <dbReference type="ChEBI" id="CHEBI:57540"/>
        <dbReference type="ChEBI" id="CHEBI:57945"/>
        <dbReference type="EC" id="1.3.1.29"/>
    </reaction>
</comment>
<comment type="catalytic activity">
    <reaction>
        <text>cis-1,2-dihydroxy-1,2-dihydrodibenzothiophene + NAD(+) = 1,2-dihydroxydibenzothiophene + NADH + H(+)</text>
        <dbReference type="Rhea" id="RHEA:24188"/>
        <dbReference type="ChEBI" id="CHEBI:15378"/>
        <dbReference type="ChEBI" id="CHEBI:16941"/>
        <dbReference type="ChEBI" id="CHEBI:17212"/>
        <dbReference type="ChEBI" id="CHEBI:57540"/>
        <dbReference type="ChEBI" id="CHEBI:57945"/>
        <dbReference type="EC" id="1.3.1.60"/>
    </reaction>
</comment>
<comment type="pathway">
    <text>Aromatic compound metabolism; naphthalene degradation.</text>
</comment>
<comment type="miscellaneous">
    <text evidence="3">Encoded on an unnamed 75 kb plasmid.</text>
</comment>
<comment type="similarity">
    <text evidence="2">Belongs to the short-chain dehydrogenases/reductases (SDR) family.</text>
</comment>
<comment type="sequence caution" evidence="2">
    <conflict type="erroneous initiation">
        <sequence resource="EMBL-CDS" id="AAA16128"/>
    </conflict>
    <text>Extended N-terminus.</text>
</comment>
<keyword id="KW-0058">Aromatic hydrocarbons catabolism</keyword>
<keyword id="KW-0520">NAD</keyword>
<keyword id="KW-0560">Oxidoreductase</keyword>
<keyword id="KW-0614">Plasmid</keyword>
<geneLocation type="plasmid">
    <name>unnamed</name>
</geneLocation>
<gene>
    <name type="primary">doxE</name>
</gene>
<dbReference type="EC" id="1.3.1.29"/>
<dbReference type="EC" id="1.3.1.60"/>
<dbReference type="EMBL" id="M60405">
    <property type="protein sequence ID" value="AAA16128.1"/>
    <property type="status" value="ALT_INIT"/>
    <property type="molecule type" value="Genomic_DNA"/>
</dbReference>
<dbReference type="SMR" id="P0A170"/>
<dbReference type="KEGG" id="ag:AAA16128"/>
<dbReference type="UniPathway" id="UPA00082"/>
<dbReference type="GO" id="GO:0018505">
    <property type="term" value="F:cis-1,2-dihydro-1,2-dihydroxynaphthalene dehydrogenase activity"/>
    <property type="evidence" value="ECO:0007669"/>
    <property type="project" value="UniProtKB-EC"/>
</dbReference>
<dbReference type="GO" id="GO:0018513">
    <property type="term" value="F:dibenzothiophene dihydrodiol dehydrogenase activity"/>
    <property type="evidence" value="ECO:0007669"/>
    <property type="project" value="UniProtKB-EC"/>
</dbReference>
<dbReference type="GO" id="GO:0050664">
    <property type="term" value="F:oxidoreductase activity, acting on NAD(P)H, oxygen as acceptor"/>
    <property type="evidence" value="ECO:0007669"/>
    <property type="project" value="TreeGrafter"/>
</dbReference>
<dbReference type="GO" id="GO:0009056">
    <property type="term" value="P:catabolic process"/>
    <property type="evidence" value="ECO:0007669"/>
    <property type="project" value="UniProtKB-KW"/>
</dbReference>
<dbReference type="CDD" id="cd05348">
    <property type="entry name" value="BphB-like_SDR_c"/>
    <property type="match status" value="1"/>
</dbReference>
<dbReference type="FunFam" id="3.40.50.720:FF:000084">
    <property type="entry name" value="Short-chain dehydrogenase reductase"/>
    <property type="match status" value="1"/>
</dbReference>
<dbReference type="Gene3D" id="3.40.50.720">
    <property type="entry name" value="NAD(P)-binding Rossmann-like Domain"/>
    <property type="match status" value="1"/>
</dbReference>
<dbReference type="InterPro" id="IPR047950">
    <property type="entry name" value="BphB-like_SDR"/>
</dbReference>
<dbReference type="InterPro" id="IPR036291">
    <property type="entry name" value="NAD(P)-bd_dom_sf"/>
</dbReference>
<dbReference type="InterPro" id="IPR002347">
    <property type="entry name" value="SDR_fam"/>
</dbReference>
<dbReference type="NCBIfam" id="NF004849">
    <property type="entry name" value="PRK06200.1"/>
    <property type="match status" value="1"/>
</dbReference>
<dbReference type="PANTHER" id="PTHR43008">
    <property type="entry name" value="BENZIL REDUCTASE"/>
    <property type="match status" value="1"/>
</dbReference>
<dbReference type="PANTHER" id="PTHR43008:SF4">
    <property type="entry name" value="CHAIN DEHYDROGENASE, PUTATIVE (AFU_ORTHOLOGUE AFUA_4G08710)-RELATED"/>
    <property type="match status" value="1"/>
</dbReference>
<dbReference type="Pfam" id="PF13561">
    <property type="entry name" value="adh_short_C2"/>
    <property type="match status" value="1"/>
</dbReference>
<dbReference type="PRINTS" id="PR00081">
    <property type="entry name" value="GDHRDH"/>
</dbReference>
<dbReference type="PRINTS" id="PR00080">
    <property type="entry name" value="SDRFAMILY"/>
</dbReference>
<dbReference type="SUPFAM" id="SSF51735">
    <property type="entry name" value="NAD(P)-binding Rossmann-fold domains"/>
    <property type="match status" value="1"/>
</dbReference>
<evidence type="ECO:0000250" key="1"/>
<evidence type="ECO:0000305" key="2"/>
<evidence type="ECO:0000305" key="3">
    <source>
    </source>
</evidence>